<keyword id="KW-0997">Cell inner membrane</keyword>
<keyword id="KW-1003">Cell membrane</keyword>
<keyword id="KW-0143">Chaperone</keyword>
<keyword id="KW-0472">Membrane</keyword>
<keyword id="KW-0653">Protein transport</keyword>
<keyword id="KW-1185">Reference proteome</keyword>
<keyword id="KW-0812">Transmembrane</keyword>
<keyword id="KW-1133">Transmembrane helix</keyword>
<keyword id="KW-0813">Transport</keyword>
<feature type="chain" id="PRO_1000070121" description="Membrane protein insertase YidC">
    <location>
        <begin position="1"/>
        <end position="592"/>
    </location>
</feature>
<feature type="transmembrane region" description="Helical" evidence="1">
    <location>
        <begin position="8"/>
        <end position="28"/>
    </location>
</feature>
<feature type="transmembrane region" description="Helical" evidence="1">
    <location>
        <begin position="363"/>
        <end position="385"/>
    </location>
</feature>
<feature type="transmembrane region" description="Helical" evidence="1">
    <location>
        <begin position="430"/>
        <end position="450"/>
    </location>
</feature>
<feature type="transmembrane region" description="Helical" evidence="1">
    <location>
        <begin position="493"/>
        <end position="513"/>
    </location>
</feature>
<feature type="transmembrane region" description="Helical" evidence="1">
    <location>
        <begin position="531"/>
        <end position="551"/>
    </location>
</feature>
<proteinExistence type="inferred from homology"/>
<gene>
    <name evidence="1" type="primary">yidC</name>
    <name type="ordered locus">Mmar10_0458</name>
</gene>
<protein>
    <recommendedName>
        <fullName evidence="1">Membrane protein insertase YidC</fullName>
    </recommendedName>
    <alternativeName>
        <fullName evidence="1">Foldase YidC</fullName>
    </alternativeName>
    <alternativeName>
        <fullName evidence="1">Membrane integrase YidC</fullName>
    </alternativeName>
    <alternativeName>
        <fullName evidence="1">Membrane protein YidC</fullName>
    </alternativeName>
</protein>
<sequence>MGEDQRNLFIALGLILVILTGYQMFVMGPAEEERRAEQAAVEASQELADPDLPASALEPAAATTVDRETALGGNQRVTIDAPSVLGSLSLTGARLDDVRLRRHTETIDDDTPVALLNPIGSDHVFYARDGWTSATSGFTDLPGGSTEWTLASGSTLTPDTPITLTYDSPSGLHFERVISVDDNYLFTLTDTVTNNSGQEVELSRYGLVRHEGRPEDETRNMAVFEGALAVIDGAMVRSSFGKLEDGNQTEESGTGGWVGITQRYWMAAAVPDQDRPFTARFRTIERGEIDAFEASYVEQAIAVPAGESLASTTRIFAGAKELGVLQQVQNEVGIERFDMAINWGWLWFLTRPFVWLLTMLEGALGQFGLAILALTLMVKIVMFPLANRAYASMAKMKAVQPKMAEIKERYGADQQKQQQALMELYKTEKINPLAGCLPILPQIPIFFALYQTLFNAIEMRHAPFFGWIRDLSAADPTNIWNLFGLIPYDPTGIWLIGGVLGIGAWPIIMGLTMAAQQALNPPPPDPMQARIFAFLPIVFTFILAPFAAGLVIYWAWNNFLSVLQQYIIMRRHGNETQVDKLVARLLKRDRGD</sequence>
<reference key="1">
    <citation type="submission" date="2006-08" db="EMBL/GenBank/DDBJ databases">
        <title>Complete sequence of Maricaulis maris MCS10.</title>
        <authorList>
            <consortium name="US DOE Joint Genome Institute"/>
            <person name="Copeland A."/>
            <person name="Lucas S."/>
            <person name="Lapidus A."/>
            <person name="Barry K."/>
            <person name="Detter J.C."/>
            <person name="Glavina del Rio T."/>
            <person name="Hammon N."/>
            <person name="Israni S."/>
            <person name="Dalin E."/>
            <person name="Tice H."/>
            <person name="Pitluck S."/>
            <person name="Saunders E."/>
            <person name="Brettin T."/>
            <person name="Bruce D."/>
            <person name="Han C."/>
            <person name="Tapia R."/>
            <person name="Gilna P."/>
            <person name="Schmutz J."/>
            <person name="Larimer F."/>
            <person name="Land M."/>
            <person name="Hauser L."/>
            <person name="Kyrpides N."/>
            <person name="Mikhailova N."/>
            <person name="Viollier P."/>
            <person name="Stephens C."/>
            <person name="Richardson P."/>
        </authorList>
    </citation>
    <scope>NUCLEOTIDE SEQUENCE [LARGE SCALE GENOMIC DNA]</scope>
    <source>
        <strain>MCS10</strain>
    </source>
</reference>
<evidence type="ECO:0000255" key="1">
    <source>
        <dbReference type="HAMAP-Rule" id="MF_01810"/>
    </source>
</evidence>
<name>YIDC_MARMM</name>
<dbReference type="EMBL" id="CP000449">
    <property type="protein sequence ID" value="ABI64751.1"/>
    <property type="molecule type" value="Genomic_DNA"/>
</dbReference>
<dbReference type="RefSeq" id="WP_011642398.1">
    <property type="nucleotide sequence ID" value="NC_008347.1"/>
</dbReference>
<dbReference type="SMR" id="Q0ASI6"/>
<dbReference type="STRING" id="394221.Mmar10_0458"/>
<dbReference type="KEGG" id="mmr:Mmar10_0458"/>
<dbReference type="eggNOG" id="COG0706">
    <property type="taxonomic scope" value="Bacteria"/>
</dbReference>
<dbReference type="HOGENOM" id="CLU_016535_1_0_5"/>
<dbReference type="OrthoDB" id="9780552at2"/>
<dbReference type="Proteomes" id="UP000001964">
    <property type="component" value="Chromosome"/>
</dbReference>
<dbReference type="GO" id="GO:0005886">
    <property type="term" value="C:plasma membrane"/>
    <property type="evidence" value="ECO:0007669"/>
    <property type="project" value="UniProtKB-SubCell"/>
</dbReference>
<dbReference type="GO" id="GO:0032977">
    <property type="term" value="F:membrane insertase activity"/>
    <property type="evidence" value="ECO:0007669"/>
    <property type="project" value="InterPro"/>
</dbReference>
<dbReference type="GO" id="GO:0051205">
    <property type="term" value="P:protein insertion into membrane"/>
    <property type="evidence" value="ECO:0007669"/>
    <property type="project" value="TreeGrafter"/>
</dbReference>
<dbReference type="GO" id="GO:0015031">
    <property type="term" value="P:protein transport"/>
    <property type="evidence" value="ECO:0007669"/>
    <property type="project" value="UniProtKB-KW"/>
</dbReference>
<dbReference type="CDD" id="cd20070">
    <property type="entry name" value="5TM_YidC_Alb3"/>
    <property type="match status" value="1"/>
</dbReference>
<dbReference type="CDD" id="cd19961">
    <property type="entry name" value="EcYidC-like_peri"/>
    <property type="match status" value="1"/>
</dbReference>
<dbReference type="Gene3D" id="2.70.98.90">
    <property type="match status" value="1"/>
</dbReference>
<dbReference type="HAMAP" id="MF_01810">
    <property type="entry name" value="YidC_type1"/>
    <property type="match status" value="1"/>
</dbReference>
<dbReference type="InterPro" id="IPR019998">
    <property type="entry name" value="Membr_insert_YidC"/>
</dbReference>
<dbReference type="InterPro" id="IPR028053">
    <property type="entry name" value="Membr_insert_YidC_N"/>
</dbReference>
<dbReference type="InterPro" id="IPR001708">
    <property type="entry name" value="YidC/ALB3/OXA1/COX18"/>
</dbReference>
<dbReference type="InterPro" id="IPR028055">
    <property type="entry name" value="YidC/Oxa/ALB_C"/>
</dbReference>
<dbReference type="InterPro" id="IPR047196">
    <property type="entry name" value="YidC_ALB_C"/>
</dbReference>
<dbReference type="InterPro" id="IPR038221">
    <property type="entry name" value="YidC_periplasmic_sf"/>
</dbReference>
<dbReference type="NCBIfam" id="NF002353">
    <property type="entry name" value="PRK01318.1-4"/>
    <property type="match status" value="1"/>
</dbReference>
<dbReference type="NCBIfam" id="TIGR03593">
    <property type="entry name" value="yidC_nterm"/>
    <property type="match status" value="1"/>
</dbReference>
<dbReference type="NCBIfam" id="TIGR03592">
    <property type="entry name" value="yidC_oxa1_cterm"/>
    <property type="match status" value="1"/>
</dbReference>
<dbReference type="PANTHER" id="PTHR12428:SF65">
    <property type="entry name" value="CYTOCHROME C OXIDASE ASSEMBLY PROTEIN COX18, MITOCHONDRIAL"/>
    <property type="match status" value="1"/>
</dbReference>
<dbReference type="PANTHER" id="PTHR12428">
    <property type="entry name" value="OXA1"/>
    <property type="match status" value="1"/>
</dbReference>
<dbReference type="Pfam" id="PF02096">
    <property type="entry name" value="60KD_IMP"/>
    <property type="match status" value="1"/>
</dbReference>
<dbReference type="Pfam" id="PF14849">
    <property type="entry name" value="YidC_periplas"/>
    <property type="match status" value="1"/>
</dbReference>
<dbReference type="PRINTS" id="PR00701">
    <property type="entry name" value="60KDINNERMP"/>
</dbReference>
<dbReference type="PRINTS" id="PR01900">
    <property type="entry name" value="YIDCPROTEIN"/>
</dbReference>
<accession>Q0ASI6</accession>
<organism>
    <name type="scientific">Maricaulis maris (strain MCS10)</name>
    <name type="common">Caulobacter maris</name>
    <dbReference type="NCBI Taxonomy" id="394221"/>
    <lineage>
        <taxon>Bacteria</taxon>
        <taxon>Pseudomonadati</taxon>
        <taxon>Pseudomonadota</taxon>
        <taxon>Alphaproteobacteria</taxon>
        <taxon>Maricaulales</taxon>
        <taxon>Maricaulaceae</taxon>
        <taxon>Maricaulis</taxon>
    </lineage>
</organism>
<comment type="function">
    <text evidence="1">Required for the insertion and/or proper folding and/or complex formation of integral membrane proteins into the membrane. Involved in integration of membrane proteins that insert both dependently and independently of the Sec translocase complex, as well as at least some lipoproteins. Aids folding of multispanning membrane proteins.</text>
</comment>
<comment type="subunit">
    <text evidence="1">Interacts with the Sec translocase complex via SecD. Specifically interacts with transmembrane segments of nascent integral membrane proteins during membrane integration.</text>
</comment>
<comment type="subcellular location">
    <subcellularLocation>
        <location evidence="1">Cell inner membrane</location>
        <topology evidence="1">Multi-pass membrane protein</topology>
    </subcellularLocation>
</comment>
<comment type="similarity">
    <text evidence="1">Belongs to the OXA1/ALB3/YidC family. Type 1 subfamily.</text>
</comment>